<accession>B3CME9</accession>
<keyword id="KW-0067">ATP-binding</keyword>
<keyword id="KW-0436">Ligase</keyword>
<keyword id="KW-0460">Magnesium</keyword>
<keyword id="KW-0479">Metal-binding</keyword>
<keyword id="KW-0547">Nucleotide-binding</keyword>
<keyword id="KW-0816">Tricarboxylic acid cycle</keyword>
<dbReference type="EC" id="6.2.1.5" evidence="1"/>
<dbReference type="EMBL" id="AM999887">
    <property type="protein sequence ID" value="CAQ55069.1"/>
    <property type="molecule type" value="Genomic_DNA"/>
</dbReference>
<dbReference type="RefSeq" id="WP_007302349.1">
    <property type="nucleotide sequence ID" value="NC_010981.1"/>
</dbReference>
<dbReference type="SMR" id="B3CME9"/>
<dbReference type="KEGG" id="wpi:WP0961"/>
<dbReference type="eggNOG" id="COG0045">
    <property type="taxonomic scope" value="Bacteria"/>
</dbReference>
<dbReference type="HOGENOM" id="CLU_037430_0_2_5"/>
<dbReference type="UniPathway" id="UPA00223">
    <property type="reaction ID" value="UER00999"/>
</dbReference>
<dbReference type="Proteomes" id="UP000008814">
    <property type="component" value="Chromosome"/>
</dbReference>
<dbReference type="GO" id="GO:0005829">
    <property type="term" value="C:cytosol"/>
    <property type="evidence" value="ECO:0007669"/>
    <property type="project" value="TreeGrafter"/>
</dbReference>
<dbReference type="GO" id="GO:0042709">
    <property type="term" value="C:succinate-CoA ligase complex"/>
    <property type="evidence" value="ECO:0007669"/>
    <property type="project" value="TreeGrafter"/>
</dbReference>
<dbReference type="GO" id="GO:0005524">
    <property type="term" value="F:ATP binding"/>
    <property type="evidence" value="ECO:0007669"/>
    <property type="project" value="UniProtKB-UniRule"/>
</dbReference>
<dbReference type="GO" id="GO:0000287">
    <property type="term" value="F:magnesium ion binding"/>
    <property type="evidence" value="ECO:0007669"/>
    <property type="project" value="UniProtKB-UniRule"/>
</dbReference>
<dbReference type="GO" id="GO:0004775">
    <property type="term" value="F:succinate-CoA ligase (ADP-forming) activity"/>
    <property type="evidence" value="ECO:0007669"/>
    <property type="project" value="UniProtKB-UniRule"/>
</dbReference>
<dbReference type="GO" id="GO:0004776">
    <property type="term" value="F:succinate-CoA ligase (GDP-forming) activity"/>
    <property type="evidence" value="ECO:0007669"/>
    <property type="project" value="RHEA"/>
</dbReference>
<dbReference type="GO" id="GO:0006104">
    <property type="term" value="P:succinyl-CoA metabolic process"/>
    <property type="evidence" value="ECO:0007669"/>
    <property type="project" value="TreeGrafter"/>
</dbReference>
<dbReference type="GO" id="GO:0006099">
    <property type="term" value="P:tricarboxylic acid cycle"/>
    <property type="evidence" value="ECO:0007669"/>
    <property type="project" value="UniProtKB-UniRule"/>
</dbReference>
<dbReference type="FunFam" id="3.30.1490.20:FF:000002">
    <property type="entry name" value="Succinate--CoA ligase [ADP-forming] subunit beta"/>
    <property type="match status" value="1"/>
</dbReference>
<dbReference type="FunFam" id="3.30.470.20:FF:000002">
    <property type="entry name" value="Succinate--CoA ligase [ADP-forming] subunit beta"/>
    <property type="match status" value="1"/>
</dbReference>
<dbReference type="FunFam" id="3.40.50.261:FF:000001">
    <property type="entry name" value="Succinate--CoA ligase [ADP-forming] subunit beta"/>
    <property type="match status" value="1"/>
</dbReference>
<dbReference type="Gene3D" id="3.30.1490.20">
    <property type="entry name" value="ATP-grasp fold, A domain"/>
    <property type="match status" value="1"/>
</dbReference>
<dbReference type="Gene3D" id="3.30.470.20">
    <property type="entry name" value="ATP-grasp fold, B domain"/>
    <property type="match status" value="1"/>
</dbReference>
<dbReference type="Gene3D" id="3.40.50.261">
    <property type="entry name" value="Succinyl-CoA synthetase domains"/>
    <property type="match status" value="1"/>
</dbReference>
<dbReference type="HAMAP" id="MF_00558">
    <property type="entry name" value="Succ_CoA_beta"/>
    <property type="match status" value="1"/>
</dbReference>
<dbReference type="InterPro" id="IPR011761">
    <property type="entry name" value="ATP-grasp"/>
</dbReference>
<dbReference type="InterPro" id="IPR013650">
    <property type="entry name" value="ATP-grasp_succ-CoA_synth-type"/>
</dbReference>
<dbReference type="InterPro" id="IPR013815">
    <property type="entry name" value="ATP_grasp_subdomain_1"/>
</dbReference>
<dbReference type="InterPro" id="IPR017866">
    <property type="entry name" value="Succ-CoA_synthase_bsu_CS"/>
</dbReference>
<dbReference type="InterPro" id="IPR005811">
    <property type="entry name" value="SUCC_ACL_C"/>
</dbReference>
<dbReference type="InterPro" id="IPR005809">
    <property type="entry name" value="Succ_CoA_ligase-like_bsu"/>
</dbReference>
<dbReference type="InterPro" id="IPR016102">
    <property type="entry name" value="Succinyl-CoA_synth-like"/>
</dbReference>
<dbReference type="NCBIfam" id="NF001913">
    <property type="entry name" value="PRK00696.1"/>
    <property type="match status" value="1"/>
</dbReference>
<dbReference type="NCBIfam" id="TIGR01016">
    <property type="entry name" value="sucCoAbeta"/>
    <property type="match status" value="1"/>
</dbReference>
<dbReference type="PANTHER" id="PTHR11815:SF10">
    <property type="entry name" value="SUCCINATE--COA LIGASE [GDP-FORMING] SUBUNIT BETA, MITOCHONDRIAL"/>
    <property type="match status" value="1"/>
</dbReference>
<dbReference type="PANTHER" id="PTHR11815">
    <property type="entry name" value="SUCCINYL-COA SYNTHETASE BETA CHAIN"/>
    <property type="match status" value="1"/>
</dbReference>
<dbReference type="Pfam" id="PF08442">
    <property type="entry name" value="ATP-grasp_2"/>
    <property type="match status" value="1"/>
</dbReference>
<dbReference type="Pfam" id="PF00549">
    <property type="entry name" value="Ligase_CoA"/>
    <property type="match status" value="1"/>
</dbReference>
<dbReference type="PIRSF" id="PIRSF001554">
    <property type="entry name" value="SucCS_beta"/>
    <property type="match status" value="1"/>
</dbReference>
<dbReference type="SUPFAM" id="SSF56059">
    <property type="entry name" value="Glutathione synthetase ATP-binding domain-like"/>
    <property type="match status" value="1"/>
</dbReference>
<dbReference type="SUPFAM" id="SSF52210">
    <property type="entry name" value="Succinyl-CoA synthetase domains"/>
    <property type="match status" value="1"/>
</dbReference>
<dbReference type="PROSITE" id="PS50975">
    <property type="entry name" value="ATP_GRASP"/>
    <property type="match status" value="1"/>
</dbReference>
<dbReference type="PROSITE" id="PS01217">
    <property type="entry name" value="SUCCINYL_COA_LIG_3"/>
    <property type="match status" value="1"/>
</dbReference>
<organism>
    <name type="scientific">Wolbachia pipientis subsp. Culex pipiens (strain wPip)</name>
    <dbReference type="NCBI Taxonomy" id="570417"/>
    <lineage>
        <taxon>Bacteria</taxon>
        <taxon>Pseudomonadati</taxon>
        <taxon>Pseudomonadota</taxon>
        <taxon>Alphaproteobacteria</taxon>
        <taxon>Rickettsiales</taxon>
        <taxon>Anaplasmataceae</taxon>
        <taxon>Wolbachieae</taxon>
        <taxon>Wolbachia</taxon>
    </lineage>
</organism>
<proteinExistence type="inferred from homology"/>
<evidence type="ECO:0000255" key="1">
    <source>
        <dbReference type="HAMAP-Rule" id="MF_00558"/>
    </source>
</evidence>
<protein>
    <recommendedName>
        <fullName evidence="1">Succinate--CoA ligase [ADP-forming] subunit beta</fullName>
        <ecNumber evidence="1">6.2.1.5</ecNumber>
    </recommendedName>
    <alternativeName>
        <fullName evidence="1">Succinyl-CoA synthetase subunit beta</fullName>
        <shortName evidence="1">SCS-beta</shortName>
    </alternativeName>
</protein>
<gene>
    <name evidence="1" type="primary">sucC</name>
    <name type="ordered locus">WP0961</name>
</gene>
<comment type="function">
    <text evidence="1">Succinyl-CoA synthetase functions in the citric acid cycle (TCA), coupling the hydrolysis of succinyl-CoA to the synthesis of either ATP or GTP and thus represents the only step of substrate-level phosphorylation in the TCA. The beta subunit provides nucleotide specificity of the enzyme and binds the substrate succinate, while the binding sites for coenzyme A and phosphate are found in the alpha subunit.</text>
</comment>
<comment type="catalytic activity">
    <reaction evidence="1">
        <text>succinate + ATP + CoA = succinyl-CoA + ADP + phosphate</text>
        <dbReference type="Rhea" id="RHEA:17661"/>
        <dbReference type="ChEBI" id="CHEBI:30031"/>
        <dbReference type="ChEBI" id="CHEBI:30616"/>
        <dbReference type="ChEBI" id="CHEBI:43474"/>
        <dbReference type="ChEBI" id="CHEBI:57287"/>
        <dbReference type="ChEBI" id="CHEBI:57292"/>
        <dbReference type="ChEBI" id="CHEBI:456216"/>
        <dbReference type="EC" id="6.2.1.5"/>
    </reaction>
    <physiologicalReaction direction="right-to-left" evidence="1">
        <dbReference type="Rhea" id="RHEA:17663"/>
    </physiologicalReaction>
</comment>
<comment type="catalytic activity">
    <reaction evidence="1">
        <text>GTP + succinate + CoA = succinyl-CoA + GDP + phosphate</text>
        <dbReference type="Rhea" id="RHEA:22120"/>
        <dbReference type="ChEBI" id="CHEBI:30031"/>
        <dbReference type="ChEBI" id="CHEBI:37565"/>
        <dbReference type="ChEBI" id="CHEBI:43474"/>
        <dbReference type="ChEBI" id="CHEBI:57287"/>
        <dbReference type="ChEBI" id="CHEBI:57292"/>
        <dbReference type="ChEBI" id="CHEBI:58189"/>
    </reaction>
    <physiologicalReaction direction="right-to-left" evidence="1">
        <dbReference type="Rhea" id="RHEA:22122"/>
    </physiologicalReaction>
</comment>
<comment type="cofactor">
    <cofactor evidence="1">
        <name>Mg(2+)</name>
        <dbReference type="ChEBI" id="CHEBI:18420"/>
    </cofactor>
    <text evidence="1">Binds 1 Mg(2+) ion per subunit.</text>
</comment>
<comment type="pathway">
    <text evidence="1">Carbohydrate metabolism; tricarboxylic acid cycle; succinate from succinyl-CoA (ligase route): step 1/1.</text>
</comment>
<comment type="subunit">
    <text evidence="1">Heterotetramer of two alpha and two beta subunits.</text>
</comment>
<comment type="similarity">
    <text evidence="1">Belongs to the succinate/malate CoA ligase beta subunit family.</text>
</comment>
<name>SUCC_WOLPP</name>
<feature type="chain" id="PRO_1000129237" description="Succinate--CoA ligase [ADP-forming] subunit beta">
    <location>
        <begin position="1"/>
        <end position="386"/>
    </location>
</feature>
<feature type="domain" description="ATP-grasp" evidence="1">
    <location>
        <begin position="9"/>
        <end position="244"/>
    </location>
</feature>
<feature type="binding site" evidence="1">
    <location>
        <position position="46"/>
    </location>
    <ligand>
        <name>ATP</name>
        <dbReference type="ChEBI" id="CHEBI:30616"/>
    </ligand>
</feature>
<feature type="binding site" evidence="1">
    <location>
        <begin position="53"/>
        <end position="55"/>
    </location>
    <ligand>
        <name>ATP</name>
        <dbReference type="ChEBI" id="CHEBI:30616"/>
    </ligand>
</feature>
<feature type="binding site" evidence="1">
    <location>
        <position position="99"/>
    </location>
    <ligand>
        <name>ATP</name>
        <dbReference type="ChEBI" id="CHEBI:30616"/>
    </ligand>
</feature>
<feature type="binding site" evidence="1">
    <location>
        <position position="102"/>
    </location>
    <ligand>
        <name>ATP</name>
        <dbReference type="ChEBI" id="CHEBI:30616"/>
    </ligand>
</feature>
<feature type="binding site" evidence="1">
    <location>
        <position position="107"/>
    </location>
    <ligand>
        <name>ATP</name>
        <dbReference type="ChEBI" id="CHEBI:30616"/>
    </ligand>
</feature>
<feature type="binding site" evidence="1">
    <location>
        <position position="199"/>
    </location>
    <ligand>
        <name>Mg(2+)</name>
        <dbReference type="ChEBI" id="CHEBI:18420"/>
    </ligand>
</feature>
<feature type="binding site" evidence="1">
    <location>
        <position position="213"/>
    </location>
    <ligand>
        <name>Mg(2+)</name>
        <dbReference type="ChEBI" id="CHEBI:18420"/>
    </ligand>
</feature>
<feature type="binding site" evidence="1">
    <location>
        <position position="264"/>
    </location>
    <ligand>
        <name>substrate</name>
        <note>ligand shared with subunit alpha</note>
    </ligand>
</feature>
<feature type="binding site" evidence="1">
    <location>
        <begin position="321"/>
        <end position="323"/>
    </location>
    <ligand>
        <name>substrate</name>
        <note>ligand shared with subunit alpha</note>
    </ligand>
</feature>
<reference key="1">
    <citation type="journal article" date="2008" name="Mol. Biol. Evol.">
        <title>Genome evolution of Wolbachia strain wPip from the Culex pipiens group.</title>
        <authorList>
            <person name="Klasson L."/>
            <person name="Walker T."/>
            <person name="Sebaihia M."/>
            <person name="Sanders M.J."/>
            <person name="Quail M.A."/>
            <person name="Lord A."/>
            <person name="Sanders S."/>
            <person name="Earl J."/>
            <person name="O'Neill S.L."/>
            <person name="Thomson N."/>
            <person name="Sinkins S.P."/>
            <person name="Parkhill J."/>
        </authorList>
    </citation>
    <scope>NUCLEOTIDE SEQUENCE [LARGE SCALE GENOMIC DNA]</scope>
    <source>
        <strain>wPip</strain>
    </source>
</reference>
<sequence length="386" mass="42052">MNIHEYQAKEILHKFNVPVPKGFVATSAEGVETQINQLKSDVFVVKAQIHAGGRGKAGGVKLAKSVEEAQQFVKNMLGITLVTHQTGPSGQQVRRIYIEEGSSIKKEYYLSLVVDPKLSRLVFIFSSEGGMDIEEVAKNSPTKIVKFDIDPATGFTNLDNSKLANNFNLNSEQIERITNIAKNIYDAFITTDASQIEINPLVETNSGDFVALDAKINFDDNALYRHPEIVQLRDYDEEVKEEIEASKHGLSYIKMDGNIGCMVNGAGLAMATMDIIKYYGAEPANFLDVGGGASKETVTEAFKIILSDSNVKGILVNIFGGIMRCDIIASGIVAAAKEMSIKVPLVVRLSGTNFEEGKKILEESGLNIIAADELGDAAQKIVKEVK</sequence>